<organism>
    <name type="scientific">Aquifex aeolicus (strain VF5)</name>
    <dbReference type="NCBI Taxonomy" id="224324"/>
    <lineage>
        <taxon>Bacteria</taxon>
        <taxon>Pseudomonadati</taxon>
        <taxon>Aquificota</taxon>
        <taxon>Aquificia</taxon>
        <taxon>Aquificales</taxon>
        <taxon>Aquificaceae</taxon>
        <taxon>Aquifex</taxon>
    </lineage>
</organism>
<comment type="catalytic activity">
    <reaction>
        <text>tRNA(Arg) + L-arginine + ATP = L-arginyl-tRNA(Arg) + AMP + diphosphate</text>
        <dbReference type="Rhea" id="RHEA:20301"/>
        <dbReference type="Rhea" id="RHEA-COMP:9658"/>
        <dbReference type="Rhea" id="RHEA-COMP:9673"/>
        <dbReference type="ChEBI" id="CHEBI:30616"/>
        <dbReference type="ChEBI" id="CHEBI:32682"/>
        <dbReference type="ChEBI" id="CHEBI:33019"/>
        <dbReference type="ChEBI" id="CHEBI:78442"/>
        <dbReference type="ChEBI" id="CHEBI:78513"/>
        <dbReference type="ChEBI" id="CHEBI:456215"/>
        <dbReference type="EC" id="6.1.1.19"/>
    </reaction>
</comment>
<comment type="subunit">
    <text evidence="1">Monomer.</text>
</comment>
<comment type="subcellular location">
    <subcellularLocation>
        <location evidence="1">Cytoplasm</location>
    </subcellularLocation>
</comment>
<comment type="similarity">
    <text evidence="2">Belongs to the class-I aminoacyl-tRNA synthetase family.</text>
</comment>
<keyword id="KW-0030">Aminoacyl-tRNA synthetase</keyword>
<keyword id="KW-0067">ATP-binding</keyword>
<keyword id="KW-0963">Cytoplasm</keyword>
<keyword id="KW-0436">Ligase</keyword>
<keyword id="KW-0547">Nucleotide-binding</keyword>
<keyword id="KW-0648">Protein biosynthesis</keyword>
<keyword id="KW-1185">Reference proteome</keyword>
<accession>O67068</accession>
<feature type="chain" id="PRO_0000151524" description="Arginine--tRNA ligase">
    <location>
        <begin position="1"/>
        <end position="583"/>
    </location>
</feature>
<feature type="short sequence motif" description="'HIGH' region">
    <location>
        <begin position="121"/>
        <end position="131"/>
    </location>
</feature>
<sequence>MKELVKEKVLKALKELYNTQVENFKVEKPKEEAHGDLASNVAFLLARELKKPPVNIAQELADFLSKDETFKSVEAVKGFINFRFSEDFLKEEFKKFLLSGEAYFKEDLGKGLKVQLEYVSANPTGPLHLGHGRGAVVGDTLARLFKFFNYDVTREYYINDAGRQVYLLGISIYYRYLEKCPERDEETFKEIKEIFEKDGYRGEYVKEIAERLRKLVGESLCKPEEANLKEVREKILKEESIELYYTKKYEPKDVVDLLSNYGLDLMMKEIREDLSLMDISFDVWFSERSLYDSGEVERLINLLKEKGYVYEKDGALWLKTSLFGDDKDRVVKRSDGTYTYFASDIAYHYNKFKRGFEKVINVWGADHHGYIPRVKAALKMLEIPEDWLEILLVQMVKLFREGKEVKMSKRAGTFVTLRELLDEVGKDAVRFIFLTKRSDTPLDFDVEKAKEKSSENPVYYVQYAHARISGIFREFKERYKKDVSVEELINYVQHLEEEAEIKLIKKVLFFKDELVDITLKREPHLLTYYLIDLAGDFHHYYNHHRILGMEENVMFSRLALVKGIKEVVRLGLNLMGVSAPERM</sequence>
<protein>
    <recommendedName>
        <fullName>Arginine--tRNA ligase</fullName>
        <ecNumber>6.1.1.19</ecNumber>
    </recommendedName>
    <alternativeName>
        <fullName>Arginyl-tRNA synthetase</fullName>
        <shortName>ArgRS</shortName>
    </alternativeName>
</protein>
<evidence type="ECO:0000250" key="1"/>
<evidence type="ECO:0000305" key="2"/>
<reference key="1">
    <citation type="journal article" date="1998" name="Nature">
        <title>The complete genome of the hyperthermophilic bacterium Aquifex aeolicus.</title>
        <authorList>
            <person name="Deckert G."/>
            <person name="Warren P.V."/>
            <person name="Gaasterland T."/>
            <person name="Young W.G."/>
            <person name="Lenox A.L."/>
            <person name="Graham D.E."/>
            <person name="Overbeek R."/>
            <person name="Snead M.A."/>
            <person name="Keller M."/>
            <person name="Aujay M."/>
            <person name="Huber R."/>
            <person name="Feldman R.A."/>
            <person name="Short J.M."/>
            <person name="Olsen G.J."/>
            <person name="Swanson R.V."/>
        </authorList>
    </citation>
    <scope>NUCLEOTIDE SEQUENCE [LARGE SCALE GENOMIC DNA]</scope>
    <source>
        <strain>VF5</strain>
    </source>
</reference>
<gene>
    <name type="primary">argS</name>
    <name type="ordered locus">aq_923</name>
</gene>
<name>SYR_AQUAE</name>
<proteinExistence type="inferred from homology"/>
<dbReference type="EC" id="6.1.1.19"/>
<dbReference type="EMBL" id="AE000657">
    <property type="protein sequence ID" value="AAC07033.1"/>
    <property type="molecule type" value="Genomic_DNA"/>
</dbReference>
<dbReference type="PIR" id="A70380">
    <property type="entry name" value="A70380"/>
</dbReference>
<dbReference type="RefSeq" id="NP_213630.1">
    <property type="nucleotide sequence ID" value="NC_000918.1"/>
</dbReference>
<dbReference type="RefSeq" id="WP_010880568.1">
    <property type="nucleotide sequence ID" value="NC_000918.1"/>
</dbReference>
<dbReference type="SMR" id="O67068"/>
<dbReference type="FunCoup" id="O67068">
    <property type="interactions" value="429"/>
</dbReference>
<dbReference type="STRING" id="224324.aq_923"/>
<dbReference type="EnsemblBacteria" id="AAC07033">
    <property type="protein sequence ID" value="AAC07033"/>
    <property type="gene ID" value="aq_923"/>
</dbReference>
<dbReference type="KEGG" id="aae:aq_923"/>
<dbReference type="PATRIC" id="fig|224324.8.peg.723"/>
<dbReference type="eggNOG" id="COG0018">
    <property type="taxonomic scope" value="Bacteria"/>
</dbReference>
<dbReference type="HOGENOM" id="CLU_006406_0_1_0"/>
<dbReference type="InParanoid" id="O67068"/>
<dbReference type="OrthoDB" id="9805987at2"/>
<dbReference type="Proteomes" id="UP000000798">
    <property type="component" value="Chromosome"/>
</dbReference>
<dbReference type="GO" id="GO:0005737">
    <property type="term" value="C:cytoplasm"/>
    <property type="evidence" value="ECO:0007669"/>
    <property type="project" value="UniProtKB-SubCell"/>
</dbReference>
<dbReference type="GO" id="GO:0004814">
    <property type="term" value="F:arginine-tRNA ligase activity"/>
    <property type="evidence" value="ECO:0000318"/>
    <property type="project" value="GO_Central"/>
</dbReference>
<dbReference type="GO" id="GO:0005524">
    <property type="term" value="F:ATP binding"/>
    <property type="evidence" value="ECO:0007669"/>
    <property type="project" value="UniProtKB-UniRule"/>
</dbReference>
<dbReference type="GO" id="GO:0006420">
    <property type="term" value="P:arginyl-tRNA aminoacylation"/>
    <property type="evidence" value="ECO:0000318"/>
    <property type="project" value="GO_Central"/>
</dbReference>
<dbReference type="CDD" id="cd00671">
    <property type="entry name" value="ArgRS_core"/>
    <property type="match status" value="1"/>
</dbReference>
<dbReference type="FunFam" id="1.10.730.10:FF:000008">
    <property type="entry name" value="Arginine--tRNA ligase"/>
    <property type="match status" value="1"/>
</dbReference>
<dbReference type="FunFam" id="3.30.1360.70:FF:000008">
    <property type="entry name" value="Arginine--tRNA ligase"/>
    <property type="match status" value="1"/>
</dbReference>
<dbReference type="FunFam" id="3.40.50.620:FF:000062">
    <property type="entry name" value="Arginine--tRNA ligase"/>
    <property type="match status" value="1"/>
</dbReference>
<dbReference type="Gene3D" id="3.30.1360.70">
    <property type="entry name" value="Arginyl tRNA synthetase N-terminal domain"/>
    <property type="match status" value="1"/>
</dbReference>
<dbReference type="Gene3D" id="3.40.50.620">
    <property type="entry name" value="HUPs"/>
    <property type="match status" value="1"/>
</dbReference>
<dbReference type="Gene3D" id="1.10.730.10">
    <property type="entry name" value="Isoleucyl-tRNA Synthetase, Domain 1"/>
    <property type="match status" value="1"/>
</dbReference>
<dbReference type="HAMAP" id="MF_00123">
    <property type="entry name" value="Arg_tRNA_synth"/>
    <property type="match status" value="1"/>
</dbReference>
<dbReference type="InterPro" id="IPR001412">
    <property type="entry name" value="aa-tRNA-synth_I_CS"/>
</dbReference>
<dbReference type="InterPro" id="IPR001278">
    <property type="entry name" value="Arg-tRNA-ligase"/>
</dbReference>
<dbReference type="InterPro" id="IPR005148">
    <property type="entry name" value="Arg-tRNA-synth_N"/>
</dbReference>
<dbReference type="InterPro" id="IPR036695">
    <property type="entry name" value="Arg-tRNA-synth_N_sf"/>
</dbReference>
<dbReference type="InterPro" id="IPR035684">
    <property type="entry name" value="ArgRS_core"/>
</dbReference>
<dbReference type="InterPro" id="IPR008909">
    <property type="entry name" value="DALR_anticod-bd"/>
</dbReference>
<dbReference type="InterPro" id="IPR014729">
    <property type="entry name" value="Rossmann-like_a/b/a_fold"/>
</dbReference>
<dbReference type="InterPro" id="IPR009080">
    <property type="entry name" value="tRNAsynth_Ia_anticodon-bd"/>
</dbReference>
<dbReference type="NCBIfam" id="TIGR00456">
    <property type="entry name" value="argS"/>
    <property type="match status" value="1"/>
</dbReference>
<dbReference type="PANTHER" id="PTHR11956:SF5">
    <property type="entry name" value="ARGININE--TRNA LIGASE, CYTOPLASMIC"/>
    <property type="match status" value="1"/>
</dbReference>
<dbReference type="PANTHER" id="PTHR11956">
    <property type="entry name" value="ARGINYL-TRNA SYNTHETASE"/>
    <property type="match status" value="1"/>
</dbReference>
<dbReference type="Pfam" id="PF03485">
    <property type="entry name" value="Arg_tRNA_synt_N"/>
    <property type="match status" value="1"/>
</dbReference>
<dbReference type="Pfam" id="PF05746">
    <property type="entry name" value="DALR_1"/>
    <property type="match status" value="1"/>
</dbReference>
<dbReference type="Pfam" id="PF00750">
    <property type="entry name" value="tRNA-synt_1d"/>
    <property type="match status" value="1"/>
</dbReference>
<dbReference type="PRINTS" id="PR01038">
    <property type="entry name" value="TRNASYNTHARG"/>
</dbReference>
<dbReference type="SMART" id="SM01016">
    <property type="entry name" value="Arg_tRNA_synt_N"/>
    <property type="match status" value="1"/>
</dbReference>
<dbReference type="SMART" id="SM00836">
    <property type="entry name" value="DALR_1"/>
    <property type="match status" value="1"/>
</dbReference>
<dbReference type="SUPFAM" id="SSF47323">
    <property type="entry name" value="Anticodon-binding domain of a subclass of class I aminoacyl-tRNA synthetases"/>
    <property type="match status" value="1"/>
</dbReference>
<dbReference type="SUPFAM" id="SSF55190">
    <property type="entry name" value="Arginyl-tRNA synthetase (ArgRS), N-terminal 'additional' domain"/>
    <property type="match status" value="1"/>
</dbReference>
<dbReference type="SUPFAM" id="SSF52374">
    <property type="entry name" value="Nucleotidylyl transferase"/>
    <property type="match status" value="1"/>
</dbReference>
<dbReference type="PROSITE" id="PS00178">
    <property type="entry name" value="AA_TRNA_LIGASE_I"/>
    <property type="match status" value="1"/>
</dbReference>